<accession>B8E690</accession>
<protein>
    <recommendedName>
        <fullName evidence="1">Diaminopimelate epimerase</fullName>
        <shortName evidence="1">DAP epimerase</shortName>
        <ecNumber evidence="1">5.1.1.7</ecNumber>
    </recommendedName>
    <alternativeName>
        <fullName evidence="1">PLP-independent amino acid racemase</fullName>
    </alternativeName>
</protein>
<feature type="chain" id="PRO_1000124431" description="Diaminopimelate epimerase">
    <location>
        <begin position="1"/>
        <end position="275"/>
    </location>
</feature>
<feature type="active site" description="Proton donor" evidence="1">
    <location>
        <position position="74"/>
    </location>
</feature>
<feature type="active site" description="Proton acceptor" evidence="1">
    <location>
        <position position="218"/>
    </location>
</feature>
<feature type="binding site" evidence="1">
    <location>
        <position position="12"/>
    </location>
    <ligand>
        <name>substrate</name>
    </ligand>
</feature>
<feature type="binding site" evidence="1">
    <location>
        <position position="45"/>
    </location>
    <ligand>
        <name>substrate</name>
    </ligand>
</feature>
<feature type="binding site" evidence="1">
    <location>
        <position position="65"/>
    </location>
    <ligand>
        <name>substrate</name>
    </ligand>
</feature>
<feature type="binding site" evidence="1">
    <location>
        <begin position="75"/>
        <end position="76"/>
    </location>
    <ligand>
        <name>substrate</name>
    </ligand>
</feature>
<feature type="binding site" evidence="1">
    <location>
        <position position="158"/>
    </location>
    <ligand>
        <name>substrate</name>
    </ligand>
</feature>
<feature type="binding site" evidence="1">
    <location>
        <position position="191"/>
    </location>
    <ligand>
        <name>substrate</name>
    </ligand>
</feature>
<feature type="binding site" evidence="1">
    <location>
        <begin position="209"/>
        <end position="210"/>
    </location>
    <ligand>
        <name>substrate</name>
    </ligand>
</feature>
<feature type="binding site" evidence="1">
    <location>
        <begin position="219"/>
        <end position="220"/>
    </location>
    <ligand>
        <name>substrate</name>
    </ligand>
</feature>
<feature type="site" description="Could be important to modulate the pK values of the two catalytic cysteine residues" evidence="1">
    <location>
        <position position="160"/>
    </location>
</feature>
<feature type="site" description="Could be important to modulate the pK values of the two catalytic cysteine residues" evidence="1">
    <location>
        <position position="209"/>
    </location>
</feature>
<feature type="site" description="Important for dimerization" evidence="1">
    <location>
        <position position="269"/>
    </location>
</feature>
<gene>
    <name evidence="1" type="primary">dapF</name>
    <name type="ordered locus">Sbal223_3896</name>
</gene>
<evidence type="ECO:0000255" key="1">
    <source>
        <dbReference type="HAMAP-Rule" id="MF_00197"/>
    </source>
</evidence>
<name>DAPF_SHEB2</name>
<organism>
    <name type="scientific">Shewanella baltica (strain OS223)</name>
    <dbReference type="NCBI Taxonomy" id="407976"/>
    <lineage>
        <taxon>Bacteria</taxon>
        <taxon>Pseudomonadati</taxon>
        <taxon>Pseudomonadota</taxon>
        <taxon>Gammaproteobacteria</taxon>
        <taxon>Alteromonadales</taxon>
        <taxon>Shewanellaceae</taxon>
        <taxon>Shewanella</taxon>
    </lineage>
</organism>
<sequence>MIQFTKMHGLGNDFMVVDGVTQNVFFSPEQIRRLADRNFGIGFDQLLLVEPPYDPDLDFHYRIFNADGTEVEQCGNGARCFARFVRNKGLTNKSKIRVSTSSGKMTLRLERDGTVTVNMGVPILEPSQIPFKAKKPEKTYLLQTPMQTFLCGAASMGNPHCVLDVEDVASASVAEIGAMLTKHERFPRGVNVGFMQVVDSGHIKLRVYERGAAETLACGTGACAAVVVGQVQGKLGQQVRVDLPGGTLTINWEGEGKPLWMTGPAQHVYDGQIQL</sequence>
<reference key="1">
    <citation type="submission" date="2008-12" db="EMBL/GenBank/DDBJ databases">
        <title>Complete sequence of chromosome of Shewanella baltica OS223.</title>
        <authorList>
            <consortium name="US DOE Joint Genome Institute"/>
            <person name="Lucas S."/>
            <person name="Copeland A."/>
            <person name="Lapidus A."/>
            <person name="Glavina del Rio T."/>
            <person name="Dalin E."/>
            <person name="Tice H."/>
            <person name="Bruce D."/>
            <person name="Goodwin L."/>
            <person name="Pitluck S."/>
            <person name="Chertkov O."/>
            <person name="Meincke L."/>
            <person name="Brettin T."/>
            <person name="Detter J.C."/>
            <person name="Han C."/>
            <person name="Kuske C.R."/>
            <person name="Larimer F."/>
            <person name="Land M."/>
            <person name="Hauser L."/>
            <person name="Kyrpides N."/>
            <person name="Ovchinnikova G."/>
            <person name="Brettar I."/>
            <person name="Rodrigues J."/>
            <person name="Konstantinidis K."/>
            <person name="Tiedje J."/>
        </authorList>
    </citation>
    <scope>NUCLEOTIDE SEQUENCE [LARGE SCALE GENOMIC DNA]</scope>
    <source>
        <strain>OS223</strain>
    </source>
</reference>
<dbReference type="EC" id="5.1.1.7" evidence="1"/>
<dbReference type="EMBL" id="CP001252">
    <property type="protein sequence ID" value="ACK48371.1"/>
    <property type="molecule type" value="Genomic_DNA"/>
</dbReference>
<dbReference type="RefSeq" id="WP_006083422.1">
    <property type="nucleotide sequence ID" value="NC_011663.1"/>
</dbReference>
<dbReference type="SMR" id="B8E690"/>
<dbReference type="GeneID" id="11775013"/>
<dbReference type="KEGG" id="sbp:Sbal223_3896"/>
<dbReference type="HOGENOM" id="CLU_053306_1_1_6"/>
<dbReference type="UniPathway" id="UPA00034">
    <property type="reaction ID" value="UER00025"/>
</dbReference>
<dbReference type="Proteomes" id="UP000002507">
    <property type="component" value="Chromosome"/>
</dbReference>
<dbReference type="GO" id="GO:0005829">
    <property type="term" value="C:cytosol"/>
    <property type="evidence" value="ECO:0007669"/>
    <property type="project" value="TreeGrafter"/>
</dbReference>
<dbReference type="GO" id="GO:0008837">
    <property type="term" value="F:diaminopimelate epimerase activity"/>
    <property type="evidence" value="ECO:0007669"/>
    <property type="project" value="UniProtKB-UniRule"/>
</dbReference>
<dbReference type="GO" id="GO:0009089">
    <property type="term" value="P:lysine biosynthetic process via diaminopimelate"/>
    <property type="evidence" value="ECO:0007669"/>
    <property type="project" value="UniProtKB-UniRule"/>
</dbReference>
<dbReference type="FunFam" id="3.10.310.10:FF:000001">
    <property type="entry name" value="Diaminopimelate epimerase"/>
    <property type="match status" value="1"/>
</dbReference>
<dbReference type="FunFam" id="3.10.310.10:FF:000002">
    <property type="entry name" value="Diaminopimelate epimerase"/>
    <property type="match status" value="1"/>
</dbReference>
<dbReference type="Gene3D" id="3.10.310.10">
    <property type="entry name" value="Diaminopimelate Epimerase, Chain A, domain 1"/>
    <property type="match status" value="2"/>
</dbReference>
<dbReference type="HAMAP" id="MF_00197">
    <property type="entry name" value="DAP_epimerase"/>
    <property type="match status" value="1"/>
</dbReference>
<dbReference type="InterPro" id="IPR018510">
    <property type="entry name" value="DAP_epimerase_AS"/>
</dbReference>
<dbReference type="InterPro" id="IPR001653">
    <property type="entry name" value="DAP_epimerase_DapF"/>
</dbReference>
<dbReference type="NCBIfam" id="TIGR00652">
    <property type="entry name" value="DapF"/>
    <property type="match status" value="1"/>
</dbReference>
<dbReference type="PANTHER" id="PTHR31689:SF0">
    <property type="entry name" value="DIAMINOPIMELATE EPIMERASE"/>
    <property type="match status" value="1"/>
</dbReference>
<dbReference type="PANTHER" id="PTHR31689">
    <property type="entry name" value="DIAMINOPIMELATE EPIMERASE, CHLOROPLASTIC"/>
    <property type="match status" value="1"/>
</dbReference>
<dbReference type="Pfam" id="PF01678">
    <property type="entry name" value="DAP_epimerase"/>
    <property type="match status" value="2"/>
</dbReference>
<dbReference type="SUPFAM" id="SSF54506">
    <property type="entry name" value="Diaminopimelate epimerase-like"/>
    <property type="match status" value="1"/>
</dbReference>
<dbReference type="PROSITE" id="PS01326">
    <property type="entry name" value="DAP_EPIMERASE"/>
    <property type="match status" value="1"/>
</dbReference>
<comment type="function">
    <text evidence="1">Catalyzes the stereoinversion of LL-2,6-diaminopimelate (L,L-DAP) to meso-diaminopimelate (meso-DAP), a precursor of L-lysine and an essential component of the bacterial peptidoglycan.</text>
</comment>
<comment type="catalytic activity">
    <reaction evidence="1">
        <text>(2S,6S)-2,6-diaminopimelate = meso-2,6-diaminopimelate</text>
        <dbReference type="Rhea" id="RHEA:15393"/>
        <dbReference type="ChEBI" id="CHEBI:57609"/>
        <dbReference type="ChEBI" id="CHEBI:57791"/>
        <dbReference type="EC" id="5.1.1.7"/>
    </reaction>
</comment>
<comment type="pathway">
    <text evidence="1">Amino-acid biosynthesis; L-lysine biosynthesis via DAP pathway; DL-2,6-diaminopimelate from LL-2,6-diaminopimelate: step 1/1.</text>
</comment>
<comment type="subunit">
    <text evidence="1">Homodimer.</text>
</comment>
<comment type="subcellular location">
    <subcellularLocation>
        <location evidence="1">Cytoplasm</location>
    </subcellularLocation>
</comment>
<comment type="similarity">
    <text evidence="1">Belongs to the diaminopimelate epimerase family.</text>
</comment>
<keyword id="KW-0028">Amino-acid biosynthesis</keyword>
<keyword id="KW-0963">Cytoplasm</keyword>
<keyword id="KW-0413">Isomerase</keyword>
<keyword id="KW-0457">Lysine biosynthesis</keyword>
<proteinExistence type="inferred from homology"/>